<organism>
    <name type="scientific">Streptococcus pyogenes serotype M18 (strain MGAS8232)</name>
    <dbReference type="NCBI Taxonomy" id="186103"/>
    <lineage>
        <taxon>Bacteria</taxon>
        <taxon>Bacillati</taxon>
        <taxon>Bacillota</taxon>
        <taxon>Bacilli</taxon>
        <taxon>Lactobacillales</taxon>
        <taxon>Streptococcaceae</taxon>
        <taxon>Streptococcus</taxon>
    </lineage>
</organism>
<protein>
    <recommendedName>
        <fullName evidence="1">Holliday junction resolvase RecU</fullName>
        <ecNumber evidence="1">3.1.21.10</ecNumber>
    </recommendedName>
    <alternativeName>
        <fullName evidence="1">Recombination protein U homolog</fullName>
    </alternativeName>
</protein>
<sequence length="202" mass="23357">MVNYPHNLIRQKVSSVQKQTKQNKVDFANRGMSFEAAINATNDYYLSRQIAVIHKKPTPVQIVKVDYPKRSRAKIVEAYFRQASTTDYCGVYKGHYVDFEAKETRQKTAMPMKNFHLHQIEHMACVLHQKGICFVLLHFSTLKETYYLPAQALISFYQIDNGSKSMPIDYIRKNGFKVAFGAFPQVPYLNIIEQNFLGGDYN</sequence>
<proteinExistence type="inferred from homology"/>
<comment type="function">
    <text evidence="1">Endonuclease that resolves Holliday junction intermediates in genetic recombination. Cleaves mobile four-strand junctions by introducing symmetrical nicks in paired strands. Promotes annealing of linear ssDNA with homologous dsDNA. Required for DNA repair, homologous recombination and chromosome segregation.</text>
</comment>
<comment type="catalytic activity">
    <reaction evidence="1">
        <text>Endonucleolytic cleavage at a junction such as a reciprocal single-stranded crossover between two homologous DNA duplexes (Holliday junction).</text>
        <dbReference type="EC" id="3.1.21.10"/>
    </reaction>
</comment>
<comment type="cofactor">
    <cofactor evidence="1">
        <name>Mg(2+)</name>
        <dbReference type="ChEBI" id="CHEBI:18420"/>
    </cofactor>
    <text evidence="1">Binds 1 Mg(2+) ion per subunit.</text>
</comment>
<comment type="subcellular location">
    <subcellularLocation>
        <location evidence="1">Cytoplasm</location>
    </subcellularLocation>
</comment>
<comment type="similarity">
    <text evidence="1">Belongs to the RecU family.</text>
</comment>
<dbReference type="EC" id="3.1.21.10" evidence="1"/>
<dbReference type="EMBL" id="AE009949">
    <property type="protein sequence ID" value="AAL98204.1"/>
    <property type="molecule type" value="Genomic_DNA"/>
</dbReference>
<dbReference type="RefSeq" id="WP_002983622.1">
    <property type="nucleotide sequence ID" value="NC_003485.1"/>
</dbReference>
<dbReference type="SMR" id="P65998"/>
<dbReference type="GeneID" id="69900483"/>
<dbReference type="KEGG" id="spm:spyM18_1660"/>
<dbReference type="HOGENOM" id="CLU_096340_0_0_9"/>
<dbReference type="GO" id="GO:0005737">
    <property type="term" value="C:cytoplasm"/>
    <property type="evidence" value="ECO:0007669"/>
    <property type="project" value="UniProtKB-SubCell"/>
</dbReference>
<dbReference type="GO" id="GO:0004519">
    <property type="term" value="F:endonuclease activity"/>
    <property type="evidence" value="ECO:0007669"/>
    <property type="project" value="UniProtKB-UniRule"/>
</dbReference>
<dbReference type="GO" id="GO:0000287">
    <property type="term" value="F:magnesium ion binding"/>
    <property type="evidence" value="ECO:0007669"/>
    <property type="project" value="UniProtKB-UniRule"/>
</dbReference>
<dbReference type="GO" id="GO:0003676">
    <property type="term" value="F:nucleic acid binding"/>
    <property type="evidence" value="ECO:0007669"/>
    <property type="project" value="InterPro"/>
</dbReference>
<dbReference type="GO" id="GO:0007059">
    <property type="term" value="P:chromosome segregation"/>
    <property type="evidence" value="ECO:0007669"/>
    <property type="project" value="UniProtKB-UniRule"/>
</dbReference>
<dbReference type="GO" id="GO:0006310">
    <property type="term" value="P:DNA recombination"/>
    <property type="evidence" value="ECO:0007669"/>
    <property type="project" value="UniProtKB-UniRule"/>
</dbReference>
<dbReference type="GO" id="GO:0006281">
    <property type="term" value="P:DNA repair"/>
    <property type="evidence" value="ECO:0007669"/>
    <property type="project" value="UniProtKB-UniRule"/>
</dbReference>
<dbReference type="CDD" id="cd22354">
    <property type="entry name" value="RecU-like"/>
    <property type="match status" value="1"/>
</dbReference>
<dbReference type="Gene3D" id="3.40.1350.10">
    <property type="match status" value="1"/>
</dbReference>
<dbReference type="HAMAP" id="MF_00130">
    <property type="entry name" value="RecU"/>
    <property type="match status" value="1"/>
</dbReference>
<dbReference type="InterPro" id="IPR004612">
    <property type="entry name" value="Resolv_RecU"/>
</dbReference>
<dbReference type="InterPro" id="IPR011335">
    <property type="entry name" value="Restrct_endonuc-II-like"/>
</dbReference>
<dbReference type="InterPro" id="IPR011856">
    <property type="entry name" value="tRNA_endonuc-like_dom_sf"/>
</dbReference>
<dbReference type="NCBIfam" id="NF002580">
    <property type="entry name" value="PRK02234.1-1"/>
    <property type="match status" value="1"/>
</dbReference>
<dbReference type="NCBIfam" id="NF002584">
    <property type="entry name" value="PRK02234.1-5"/>
    <property type="match status" value="1"/>
</dbReference>
<dbReference type="NCBIfam" id="TIGR00648">
    <property type="entry name" value="recU"/>
    <property type="match status" value="1"/>
</dbReference>
<dbReference type="Pfam" id="PF03838">
    <property type="entry name" value="RecU"/>
    <property type="match status" value="1"/>
</dbReference>
<dbReference type="PIRSF" id="PIRSF037785">
    <property type="entry name" value="RecU"/>
    <property type="match status" value="1"/>
</dbReference>
<dbReference type="SUPFAM" id="SSF52980">
    <property type="entry name" value="Restriction endonuclease-like"/>
    <property type="match status" value="1"/>
</dbReference>
<name>RECU_STRP8</name>
<accession>P65998</accession>
<accession>Q8NZZ0</accession>
<evidence type="ECO:0000255" key="1">
    <source>
        <dbReference type="HAMAP-Rule" id="MF_00130"/>
    </source>
</evidence>
<feature type="chain" id="PRO_0000212317" description="Holliday junction resolvase RecU">
    <location>
        <begin position="1"/>
        <end position="202"/>
    </location>
</feature>
<feature type="binding site" evidence="1">
    <location>
        <position position="85"/>
    </location>
    <ligand>
        <name>Mg(2+)</name>
        <dbReference type="ChEBI" id="CHEBI:18420"/>
    </ligand>
</feature>
<feature type="binding site" evidence="1">
    <location>
        <position position="87"/>
    </location>
    <ligand>
        <name>Mg(2+)</name>
        <dbReference type="ChEBI" id="CHEBI:18420"/>
    </ligand>
</feature>
<feature type="binding site" evidence="1">
    <location>
        <position position="100"/>
    </location>
    <ligand>
        <name>Mg(2+)</name>
        <dbReference type="ChEBI" id="CHEBI:18420"/>
    </ligand>
</feature>
<feature type="binding site" evidence="1">
    <location>
        <position position="119"/>
    </location>
    <ligand>
        <name>Mg(2+)</name>
        <dbReference type="ChEBI" id="CHEBI:18420"/>
    </ligand>
</feature>
<feature type="site" description="Transition state stabilizer" evidence="1">
    <location>
        <position position="102"/>
    </location>
</feature>
<reference key="1">
    <citation type="journal article" date="2002" name="Proc. Natl. Acad. Sci. U.S.A.">
        <title>Genome sequence and comparative microarray analysis of serotype M18 group A Streptococcus strains associated with acute rheumatic fever outbreaks.</title>
        <authorList>
            <person name="Smoot J.C."/>
            <person name="Barbian K.D."/>
            <person name="Van Gompel J.J."/>
            <person name="Smoot L.M."/>
            <person name="Chaussee M.S."/>
            <person name="Sylva G.L."/>
            <person name="Sturdevant D.E."/>
            <person name="Ricklefs S.M."/>
            <person name="Porcella S.F."/>
            <person name="Parkins L.D."/>
            <person name="Beres S.B."/>
            <person name="Campbell D.S."/>
            <person name="Smith T.M."/>
            <person name="Zhang Q."/>
            <person name="Kapur V."/>
            <person name="Daly J.A."/>
            <person name="Veasy L.G."/>
            <person name="Musser J.M."/>
        </authorList>
    </citation>
    <scope>NUCLEOTIDE SEQUENCE [LARGE SCALE GENOMIC DNA]</scope>
    <source>
        <strain>MGAS8232</strain>
    </source>
</reference>
<keyword id="KW-0963">Cytoplasm</keyword>
<keyword id="KW-0227">DNA damage</keyword>
<keyword id="KW-0233">DNA recombination</keyword>
<keyword id="KW-0234">DNA repair</keyword>
<keyword id="KW-0255">Endonuclease</keyword>
<keyword id="KW-0378">Hydrolase</keyword>
<keyword id="KW-0460">Magnesium</keyword>
<keyword id="KW-0479">Metal-binding</keyword>
<keyword id="KW-0540">Nuclease</keyword>
<gene>
    <name evidence="1" type="primary">recU</name>
    <name type="ordered locus">spyM18_1660</name>
</gene>